<dbReference type="EMBL" id="AE005174">
    <property type="protein sequence ID" value="AAG59028.1"/>
    <property type="molecule type" value="Genomic_DNA"/>
</dbReference>
<dbReference type="EMBL" id="BA000007">
    <property type="protein sequence ID" value="BAB38185.1"/>
    <property type="molecule type" value="Genomic_DNA"/>
</dbReference>
<dbReference type="PIR" id="B98224">
    <property type="entry name" value="B98224"/>
</dbReference>
<dbReference type="PIR" id="H86070">
    <property type="entry name" value="H86070"/>
</dbReference>
<dbReference type="RefSeq" id="NP_312789.1">
    <property type="nucleotide sequence ID" value="NC_002695.1"/>
</dbReference>
<dbReference type="RefSeq" id="WP_000347714.1">
    <property type="nucleotide sequence ID" value="NZ_VOAI01000017.1"/>
</dbReference>
<dbReference type="SMR" id="P0AG72"/>
<dbReference type="STRING" id="155864.Z5354"/>
<dbReference type="GeneID" id="75204826"/>
<dbReference type="GeneID" id="915142"/>
<dbReference type="KEGG" id="ece:Z5354"/>
<dbReference type="KEGG" id="ecs:ECs_4762"/>
<dbReference type="PATRIC" id="fig|386585.9.peg.4971"/>
<dbReference type="eggNOG" id="COG1322">
    <property type="taxonomic scope" value="Bacteria"/>
</dbReference>
<dbReference type="HOGENOM" id="CLU_024057_0_1_6"/>
<dbReference type="OMA" id="GDSKMQG"/>
<dbReference type="Proteomes" id="UP000000558">
    <property type="component" value="Chromosome"/>
</dbReference>
<dbReference type="Proteomes" id="UP000002519">
    <property type="component" value="Chromosome"/>
</dbReference>
<dbReference type="GO" id="GO:0006310">
    <property type="term" value="P:DNA recombination"/>
    <property type="evidence" value="ECO:0007669"/>
    <property type="project" value="UniProtKB-KW"/>
</dbReference>
<dbReference type="InterPro" id="IPR003798">
    <property type="entry name" value="DNA_recombination_RmuC"/>
</dbReference>
<dbReference type="NCBIfam" id="NF007686">
    <property type="entry name" value="PRK10361.1"/>
    <property type="match status" value="1"/>
</dbReference>
<dbReference type="PANTHER" id="PTHR30563">
    <property type="entry name" value="DNA RECOMBINATION PROTEIN RMUC"/>
    <property type="match status" value="1"/>
</dbReference>
<dbReference type="PANTHER" id="PTHR30563:SF0">
    <property type="entry name" value="DNA RECOMBINATION PROTEIN RMUC"/>
    <property type="match status" value="1"/>
</dbReference>
<dbReference type="Pfam" id="PF02646">
    <property type="entry name" value="RmuC"/>
    <property type="match status" value="1"/>
</dbReference>
<protein>
    <recommendedName>
        <fullName>DNA recombination protein RmuC</fullName>
    </recommendedName>
</protein>
<organism>
    <name type="scientific">Escherichia coli O157:H7</name>
    <dbReference type="NCBI Taxonomy" id="83334"/>
    <lineage>
        <taxon>Bacteria</taxon>
        <taxon>Pseudomonadati</taxon>
        <taxon>Pseudomonadota</taxon>
        <taxon>Gammaproteobacteria</taxon>
        <taxon>Enterobacterales</taxon>
        <taxon>Enterobacteriaceae</taxon>
        <taxon>Escherichia</taxon>
    </lineage>
</organism>
<name>RMUC_ECO57</name>
<gene>
    <name type="primary">rmuC</name>
    <name type="ordered locus">Z5354</name>
    <name type="ordered locus">ECs4762</name>
</gene>
<proteinExistence type="inferred from homology"/>
<feature type="chain" id="PRO_0000202037" description="DNA recombination protein RmuC">
    <location>
        <begin position="1"/>
        <end position="475"/>
    </location>
</feature>
<feature type="region of interest" description="Disordered" evidence="3">
    <location>
        <begin position="440"/>
        <end position="475"/>
    </location>
</feature>
<feature type="coiled-coil region" evidence="2">
    <location>
        <begin position="25"/>
        <end position="200"/>
    </location>
</feature>
<sequence>MDFSIMVYAVIALVGVAIGWLFASYQHAQQKAEQLAEREEMVAELSAAKQQITQSEHWRAECELLNNEVRSLQSINTSLEADLREVTTRMEAAQQHADDKIRQMINSEQRLSEQFENLANRIFEHSNRRVDEQNRQSLNSLLSPLREQLDGFRRQVQDSFGKEAQERHTLTHEIRNLQQLNAQMAQEAINLTRALKGDNKTQGNWGEVVLTRVLEASGLREGYEYETQVSIENDARSRMQPDVIVRLPQGKDVVIDAKMTLVAYERYFNAEDDYTRESALQEHIASVRNHIRLLGRKDYQQLPGLRTLDYVLMFIPVEPAFLLALDRQPELITEALKNNIMLVSPTTLLVALRTIANLWRYEHQSRNAQQIADRASKLYDKMRLFIDDMSAIGQSLDKAQDNYRQAMKKLSSGRGNVLAQAEAFRGLGVEIKREINPDLAEQAVSQDEEYRLRSVPEQPNDEAYQRDDEYNQQSR</sequence>
<comment type="function">
    <text evidence="1">Involved in DNA recombination.</text>
</comment>
<comment type="similarity">
    <text evidence="4">Belongs to the RmuC family.</text>
</comment>
<accession>P0AG72</accession>
<accession>P27850</accession>
<keyword id="KW-0175">Coiled coil</keyword>
<keyword id="KW-0233">DNA recombination</keyword>
<keyword id="KW-1185">Reference proteome</keyword>
<evidence type="ECO:0000250" key="1"/>
<evidence type="ECO:0000255" key="2"/>
<evidence type="ECO:0000256" key="3">
    <source>
        <dbReference type="SAM" id="MobiDB-lite"/>
    </source>
</evidence>
<evidence type="ECO:0000305" key="4"/>
<reference key="1">
    <citation type="journal article" date="2001" name="Nature">
        <title>Genome sequence of enterohaemorrhagic Escherichia coli O157:H7.</title>
        <authorList>
            <person name="Perna N.T."/>
            <person name="Plunkett G. III"/>
            <person name="Burland V."/>
            <person name="Mau B."/>
            <person name="Glasner J.D."/>
            <person name="Rose D.J."/>
            <person name="Mayhew G.F."/>
            <person name="Evans P.S."/>
            <person name="Gregor J."/>
            <person name="Kirkpatrick H.A."/>
            <person name="Posfai G."/>
            <person name="Hackett J."/>
            <person name="Klink S."/>
            <person name="Boutin A."/>
            <person name="Shao Y."/>
            <person name="Miller L."/>
            <person name="Grotbeck E.J."/>
            <person name="Davis N.W."/>
            <person name="Lim A."/>
            <person name="Dimalanta E.T."/>
            <person name="Potamousis K."/>
            <person name="Apodaca J."/>
            <person name="Anantharaman T.S."/>
            <person name="Lin J."/>
            <person name="Yen G."/>
            <person name="Schwartz D.C."/>
            <person name="Welch R.A."/>
            <person name="Blattner F.R."/>
        </authorList>
    </citation>
    <scope>NUCLEOTIDE SEQUENCE [LARGE SCALE GENOMIC DNA]</scope>
    <source>
        <strain>O157:H7 / EDL933 / ATCC 700927 / EHEC</strain>
    </source>
</reference>
<reference key="2">
    <citation type="journal article" date="2001" name="DNA Res.">
        <title>Complete genome sequence of enterohemorrhagic Escherichia coli O157:H7 and genomic comparison with a laboratory strain K-12.</title>
        <authorList>
            <person name="Hayashi T."/>
            <person name="Makino K."/>
            <person name="Ohnishi M."/>
            <person name="Kurokawa K."/>
            <person name="Ishii K."/>
            <person name="Yokoyama K."/>
            <person name="Han C.-G."/>
            <person name="Ohtsubo E."/>
            <person name="Nakayama K."/>
            <person name="Murata T."/>
            <person name="Tanaka M."/>
            <person name="Tobe T."/>
            <person name="Iida T."/>
            <person name="Takami H."/>
            <person name="Honda T."/>
            <person name="Sasakawa C."/>
            <person name="Ogasawara N."/>
            <person name="Yasunaga T."/>
            <person name="Kuhara S."/>
            <person name="Shiba T."/>
            <person name="Hattori M."/>
            <person name="Shinagawa H."/>
        </authorList>
    </citation>
    <scope>NUCLEOTIDE SEQUENCE [LARGE SCALE GENOMIC DNA]</scope>
    <source>
        <strain>O157:H7 / Sakai / RIMD 0509952 / EHEC</strain>
    </source>
</reference>